<comment type="function">
    <text evidence="1">Part of the high-affinity ATP-driven potassium transport (or Kdp) system, which catalyzes the hydrolysis of ATP coupled with the electrogenic transport of potassium into the cytoplasm. This subunit acts as a catalytic chaperone that increases the ATP-binding affinity of the ATP-hydrolyzing subunit KdpB by the formation of a transient KdpB/KdpC/ATP ternary complex.</text>
</comment>
<comment type="subunit">
    <text evidence="1">The system is composed of three essential subunits: KdpA, KdpB and KdpC.</text>
</comment>
<comment type="subcellular location">
    <subcellularLocation>
        <location evidence="1">Cell membrane</location>
        <topology evidence="1">Single-pass membrane protein</topology>
    </subcellularLocation>
</comment>
<comment type="similarity">
    <text evidence="1">Belongs to the KdpC family.</text>
</comment>
<evidence type="ECO:0000255" key="1">
    <source>
        <dbReference type="HAMAP-Rule" id="MF_00276"/>
    </source>
</evidence>
<sequence>MNTIRNSICLTIITMVLCGFLFPLAITLIGQIFFYQQANGSLITYDNRIVGSKLIGQHWTDTRYFHGRPSAVDYNMNPEKLYKNGVSSGGSNESNGNTELIARVKHHVKFGNSNVTIDAATSSGSGLDPHITVENALKQAPRIADARHISTSRVTDLIQHRMQRGVLTNDYVNVLELNIALDKMKY</sequence>
<protein>
    <recommendedName>
        <fullName evidence="1">Potassium-transporting ATPase KdpC subunit</fullName>
    </recommendedName>
    <alternativeName>
        <fullName evidence="1">ATP phosphohydrolase [potassium-transporting] C chain</fullName>
    </alternativeName>
    <alternativeName>
        <fullName evidence="1">Potassium-binding and translocating subunit C</fullName>
    </alternativeName>
    <alternativeName>
        <fullName evidence="1">Potassium-translocating ATPase C chain</fullName>
    </alternativeName>
</protein>
<reference key="1">
    <citation type="journal article" date="2007" name="PLoS ONE">
        <title>Molecular correlates of host specialization in Staphylococcus aureus.</title>
        <authorList>
            <person name="Herron-Olson L."/>
            <person name="Fitzgerald J.R."/>
            <person name="Musser J.M."/>
            <person name="Kapur V."/>
        </authorList>
    </citation>
    <scope>NUCLEOTIDE SEQUENCE [LARGE SCALE GENOMIC DNA]</scope>
    <source>
        <strain>bovine RF122 / ET3-1</strain>
    </source>
</reference>
<name>KDPC_STAAB</name>
<proteinExistence type="inferred from homology"/>
<gene>
    <name evidence="1" type="primary">kdpC</name>
    <name type="ordered locus">SAB1960c</name>
</gene>
<keyword id="KW-0067">ATP-binding</keyword>
<keyword id="KW-1003">Cell membrane</keyword>
<keyword id="KW-0406">Ion transport</keyword>
<keyword id="KW-0472">Membrane</keyword>
<keyword id="KW-0547">Nucleotide-binding</keyword>
<keyword id="KW-0630">Potassium</keyword>
<keyword id="KW-0633">Potassium transport</keyword>
<keyword id="KW-0812">Transmembrane</keyword>
<keyword id="KW-1133">Transmembrane helix</keyword>
<keyword id="KW-0813">Transport</keyword>
<dbReference type="EMBL" id="AJ938182">
    <property type="protein sequence ID" value="CAI81649.1"/>
    <property type="molecule type" value="Genomic_DNA"/>
</dbReference>
<dbReference type="RefSeq" id="WP_001092404.1">
    <property type="nucleotide sequence ID" value="NC_007622.1"/>
</dbReference>
<dbReference type="SMR" id="Q2YUH8"/>
<dbReference type="KEGG" id="sab:SAB1960c"/>
<dbReference type="HOGENOM" id="CLU_077094_2_0_9"/>
<dbReference type="GO" id="GO:0005886">
    <property type="term" value="C:plasma membrane"/>
    <property type="evidence" value="ECO:0007669"/>
    <property type="project" value="UniProtKB-SubCell"/>
</dbReference>
<dbReference type="GO" id="GO:0005524">
    <property type="term" value="F:ATP binding"/>
    <property type="evidence" value="ECO:0007669"/>
    <property type="project" value="UniProtKB-UniRule"/>
</dbReference>
<dbReference type="GO" id="GO:0008556">
    <property type="term" value="F:P-type potassium transmembrane transporter activity"/>
    <property type="evidence" value="ECO:0007669"/>
    <property type="project" value="InterPro"/>
</dbReference>
<dbReference type="HAMAP" id="MF_00276">
    <property type="entry name" value="KdpC"/>
    <property type="match status" value="1"/>
</dbReference>
<dbReference type="InterPro" id="IPR003820">
    <property type="entry name" value="KdpC"/>
</dbReference>
<dbReference type="NCBIfam" id="TIGR00681">
    <property type="entry name" value="kdpC"/>
    <property type="match status" value="1"/>
</dbReference>
<dbReference type="NCBIfam" id="NF001454">
    <property type="entry name" value="PRK00315.1"/>
    <property type="match status" value="1"/>
</dbReference>
<dbReference type="NCBIfam" id="NF010602">
    <property type="entry name" value="PRK13998.1"/>
    <property type="match status" value="1"/>
</dbReference>
<dbReference type="PANTHER" id="PTHR30042">
    <property type="entry name" value="POTASSIUM-TRANSPORTING ATPASE C CHAIN"/>
    <property type="match status" value="1"/>
</dbReference>
<dbReference type="PANTHER" id="PTHR30042:SF2">
    <property type="entry name" value="POTASSIUM-TRANSPORTING ATPASE KDPC SUBUNIT"/>
    <property type="match status" value="1"/>
</dbReference>
<dbReference type="Pfam" id="PF02669">
    <property type="entry name" value="KdpC"/>
    <property type="match status" value="1"/>
</dbReference>
<dbReference type="PIRSF" id="PIRSF001296">
    <property type="entry name" value="K_ATPase_KdpC"/>
    <property type="match status" value="1"/>
</dbReference>
<feature type="chain" id="PRO_1000022321" description="Potassium-transporting ATPase KdpC subunit">
    <location>
        <begin position="1"/>
        <end position="186"/>
    </location>
</feature>
<feature type="transmembrane region" description="Helical" evidence="1">
    <location>
        <begin position="10"/>
        <end position="30"/>
    </location>
</feature>
<organism>
    <name type="scientific">Staphylococcus aureus (strain bovine RF122 / ET3-1)</name>
    <dbReference type="NCBI Taxonomy" id="273036"/>
    <lineage>
        <taxon>Bacteria</taxon>
        <taxon>Bacillati</taxon>
        <taxon>Bacillota</taxon>
        <taxon>Bacilli</taxon>
        <taxon>Bacillales</taxon>
        <taxon>Staphylococcaceae</taxon>
        <taxon>Staphylococcus</taxon>
    </lineage>
</organism>
<accession>Q2YUH8</accession>